<sequence>MRIFMKSKLLVIATTALLFAACSDSFLDRAPEGNYVDATFYTSDEALEAATAPLYNRAWFDYNQRSIVPIGSGRANDMYSPWNYPQFVTFQVTALDENLSGAWSGFYSVVTMANSVINAVETQTQGSVSEAAKTKAIAEARLMRACAYFYMLRIWGPVILIEDNQKLVDNPVRPLNREEDVFQFIINDLNYAVDNLSEQSDKGRATSWAAKGILAKVYLARSGWNNGGTRDEGDLELARQYASDVCENSGLDLMTNYEDLFKYKNNNNQESLLAMQWVPLGEWYECNTLLSDLAFSTEVTGGVNCWSSYNGSIDMLQQYELADTLRRNATFFTKGSYYSYICIKDGGYTYKGTASPIKKGVPGGPDDDNDGKVKQMNSPLNTYILRLADVYLTYAEACLGNNSTLSDGRGLYFFNRVRERAKINKKSSITLDDIIRERRVEFGMEYSNWYDMVTWFRYLPDKMLNYFNNQWRGYRTDAIIKDEDGKLHFGKYDTDGTTFLEGPEYYTAPEFTINIEAEDIFLPYPESDVIQNPLLNEPPVPYTFNE</sequence>
<keyword id="KW-0002">3D-structure</keyword>
<keyword id="KW-0119">Carbohydrate metabolism</keyword>
<keyword id="KW-0998">Cell outer membrane</keyword>
<keyword id="KW-0449">Lipoprotein</keyword>
<keyword id="KW-0472">Membrane</keyword>
<keyword id="KW-0564">Palmitate</keyword>
<keyword id="KW-0732">Signal</keyword>
<dbReference type="EMBL" id="AAXF02000049">
    <property type="protein sequence ID" value="EDO11442.1"/>
    <property type="molecule type" value="Genomic_DNA"/>
</dbReference>
<dbReference type="PDB" id="5E75">
    <property type="method" value="X-ray"/>
    <property type="resolution" value="1.36 A"/>
    <property type="chains" value="A=28-546"/>
</dbReference>
<dbReference type="PDB" id="5E76">
    <property type="method" value="X-ray"/>
    <property type="resolution" value="2.30 A"/>
    <property type="chains" value="A=36-546"/>
</dbReference>
<dbReference type="PDBsum" id="5E75"/>
<dbReference type="PDBsum" id="5E76"/>
<dbReference type="SMR" id="A7LXT5"/>
<dbReference type="eggNOG" id="COG0561">
    <property type="taxonomic scope" value="Bacteria"/>
</dbReference>
<dbReference type="HOGENOM" id="CLU_015553_1_3_10"/>
<dbReference type="UniPathway" id="UPA01045"/>
<dbReference type="Proteomes" id="UP000005475">
    <property type="component" value="Unassembled WGS sequence"/>
</dbReference>
<dbReference type="GO" id="GO:0009279">
    <property type="term" value="C:cell outer membrane"/>
    <property type="evidence" value="ECO:0007669"/>
    <property type="project" value="UniProtKB-SubCell"/>
</dbReference>
<dbReference type="GO" id="GO:0030247">
    <property type="term" value="F:polysaccharide binding"/>
    <property type="evidence" value="ECO:0000314"/>
    <property type="project" value="UniProtKB"/>
</dbReference>
<dbReference type="GO" id="GO:0085030">
    <property type="term" value="P:symbiotic process benefiting host"/>
    <property type="evidence" value="ECO:0000314"/>
    <property type="project" value="UniProtKB"/>
</dbReference>
<dbReference type="GO" id="GO:2000899">
    <property type="term" value="P:xyloglucan catabolic process"/>
    <property type="evidence" value="ECO:0000314"/>
    <property type="project" value="UniProtKB"/>
</dbReference>
<dbReference type="Gene3D" id="1.25.40.390">
    <property type="match status" value="1"/>
</dbReference>
<dbReference type="InterPro" id="IPR033985">
    <property type="entry name" value="SusD-like_N"/>
</dbReference>
<dbReference type="InterPro" id="IPR012944">
    <property type="entry name" value="SusD_RagB_dom"/>
</dbReference>
<dbReference type="InterPro" id="IPR011990">
    <property type="entry name" value="TPR-like_helical_dom_sf"/>
</dbReference>
<dbReference type="Pfam" id="PF14322">
    <property type="entry name" value="SusD-like_3"/>
    <property type="match status" value="1"/>
</dbReference>
<dbReference type="Pfam" id="PF07980">
    <property type="entry name" value="SusD_RagB"/>
    <property type="match status" value="1"/>
</dbReference>
<dbReference type="SUPFAM" id="SSF48452">
    <property type="entry name" value="TPR-like"/>
    <property type="match status" value="1"/>
</dbReference>
<dbReference type="PROSITE" id="PS51257">
    <property type="entry name" value="PROKAR_LIPOPROTEIN"/>
    <property type="match status" value="1"/>
</dbReference>
<comment type="function">
    <text evidence="2">Polysaccharide-binding protein present at the surface of the cell. Probably mediates xyloglucan-binding before xyloglucan transport in the periplasm for degradation.</text>
</comment>
<comment type="pathway">
    <text evidence="2">Glucan metabolism; xyloglucan degradation.</text>
</comment>
<comment type="subcellular location">
    <subcellularLocation>
        <location evidence="3">Cell outer membrane</location>
        <topology evidence="3">Lipid-anchor</topology>
    </subcellularLocation>
    <text evidence="2">Cell outer membrane localization is predicted by analogy with the archetypal sus locus.</text>
</comment>
<comment type="miscellaneous">
    <text evidence="4">Gut bacteria supply the human body with energy from dietary polysaccharides through glycosidases that are absent in the human genome. Xyloglucans are a ubiquitous family of highly branched plant cell wall polysaccharides present in the vegetables we consume. Enzymes involved in xyloglucan degradation mediate the conversion of otherwise indigestible plant polysaccharides to short-chain fatty acids (PubMed:24463512).</text>
</comment>
<comment type="similarity">
    <text evidence="3">Belongs to the SusD family.</text>
</comment>
<evidence type="ECO:0000255" key="1">
    <source>
        <dbReference type="PROSITE-ProRule" id="PRU00303"/>
    </source>
</evidence>
<evidence type="ECO:0000269" key="2">
    <source>
    </source>
</evidence>
<evidence type="ECO:0000305" key="3"/>
<evidence type="ECO:0000305" key="4">
    <source>
    </source>
</evidence>
<evidence type="ECO:0007829" key="5">
    <source>
        <dbReference type="PDB" id="5E75"/>
    </source>
</evidence>
<accession>A7LXT5</accession>
<name>SUSD_BACO1</name>
<proteinExistence type="evidence at protein level"/>
<gene>
    <name type="ORF">BACOVA_02651</name>
</gene>
<protein>
    <recommendedName>
        <fullName>SusD-like protein BACOVA_02651</fullName>
    </recommendedName>
</protein>
<feature type="signal peptide" evidence="1">
    <location>
        <begin position="1"/>
        <end position="21"/>
    </location>
</feature>
<feature type="chain" id="PRO_0000425884" description="SusD-like protein BACOVA_02651">
    <location>
        <begin position="22"/>
        <end position="546"/>
    </location>
</feature>
<feature type="lipid moiety-binding region" description="N-palmitoyl cysteine" evidence="1">
    <location>
        <position position="22"/>
    </location>
</feature>
<feature type="lipid moiety-binding region" description="S-diacylglycerol cysteine" evidence="1">
    <location>
        <position position="22"/>
    </location>
</feature>
<feature type="helix" evidence="5">
    <location>
        <begin position="44"/>
        <end position="51"/>
    </location>
</feature>
<feature type="helix" evidence="5">
    <location>
        <begin position="52"/>
        <end position="55"/>
    </location>
</feature>
<feature type="helix" evidence="5">
    <location>
        <begin position="57"/>
        <end position="59"/>
    </location>
</feature>
<feature type="helix" evidence="5">
    <location>
        <begin position="60"/>
        <end position="63"/>
    </location>
</feature>
<feature type="turn" evidence="5">
    <location>
        <begin position="64"/>
        <end position="66"/>
    </location>
</feature>
<feature type="helix" evidence="5">
    <location>
        <begin position="67"/>
        <end position="71"/>
    </location>
</feature>
<feature type="turn" evidence="5">
    <location>
        <begin position="72"/>
        <end position="76"/>
    </location>
</feature>
<feature type="strand" evidence="5">
    <location>
        <begin position="77"/>
        <end position="79"/>
    </location>
</feature>
<feature type="strand" evidence="5">
    <location>
        <begin position="81"/>
        <end position="84"/>
    </location>
</feature>
<feature type="helix" evidence="5">
    <location>
        <begin position="85"/>
        <end position="89"/>
    </location>
</feature>
<feature type="helix" evidence="5">
    <location>
        <begin position="97"/>
        <end position="122"/>
    </location>
</feature>
<feature type="helix" evidence="5">
    <location>
        <begin position="130"/>
        <end position="152"/>
    </location>
</feature>
<feature type="strand" evidence="5">
    <location>
        <begin position="155"/>
        <end position="158"/>
    </location>
</feature>
<feature type="helix" evidence="5">
    <location>
        <begin position="164"/>
        <end position="169"/>
    </location>
</feature>
<feature type="helix" evidence="5">
    <location>
        <begin position="178"/>
        <end position="195"/>
    </location>
</feature>
<feature type="helix" evidence="5">
    <location>
        <begin position="207"/>
        <end position="222"/>
    </location>
</feature>
<feature type="turn" evidence="5">
    <location>
        <begin position="223"/>
        <end position="225"/>
    </location>
</feature>
<feature type="helix" evidence="5">
    <location>
        <begin position="232"/>
        <end position="248"/>
    </location>
</feature>
<feature type="helix" evidence="5">
    <location>
        <begin position="257"/>
        <end position="261"/>
    </location>
</feature>
<feature type="helix" evidence="5">
    <location>
        <begin position="263"/>
        <end position="265"/>
    </location>
</feature>
<feature type="strand" evidence="5">
    <location>
        <begin position="271"/>
        <end position="275"/>
    </location>
</feature>
<feature type="helix" evidence="5">
    <location>
        <begin position="283"/>
        <end position="285"/>
    </location>
</feature>
<feature type="helix" evidence="5">
    <location>
        <begin position="290"/>
        <end position="293"/>
    </location>
</feature>
<feature type="helix" evidence="5">
    <location>
        <begin position="297"/>
        <end position="299"/>
    </location>
</feature>
<feature type="turn" evidence="5">
    <location>
        <begin position="300"/>
        <end position="302"/>
    </location>
</feature>
<feature type="helix" evidence="5">
    <location>
        <begin position="313"/>
        <end position="318"/>
    </location>
</feature>
<feature type="helix" evidence="5">
    <location>
        <begin position="324"/>
        <end position="330"/>
    </location>
</feature>
<feature type="helix" evidence="5">
    <location>
        <begin position="343"/>
        <end position="345"/>
    </location>
</feature>
<feature type="strand" evidence="5">
    <location>
        <begin position="352"/>
        <end position="354"/>
    </location>
</feature>
<feature type="turn" evidence="5">
    <location>
        <begin position="365"/>
        <end position="368"/>
    </location>
</feature>
<feature type="strand" evidence="5">
    <location>
        <begin position="382"/>
        <end position="386"/>
    </location>
</feature>
<feature type="helix" evidence="5">
    <location>
        <begin position="387"/>
        <end position="399"/>
    </location>
</feature>
<feature type="helix" evidence="5">
    <location>
        <begin position="409"/>
        <end position="420"/>
    </location>
</feature>
<feature type="strand" evidence="5">
    <location>
        <begin position="427"/>
        <end position="429"/>
    </location>
</feature>
<feature type="helix" evidence="5">
    <location>
        <begin position="431"/>
        <end position="442"/>
    </location>
</feature>
<feature type="turn" evidence="5">
    <location>
        <begin position="443"/>
        <end position="446"/>
    </location>
</feature>
<feature type="helix" evidence="5">
    <location>
        <begin position="448"/>
        <end position="458"/>
    </location>
</feature>
<feature type="helix" evidence="5">
    <location>
        <begin position="460"/>
        <end position="468"/>
    </location>
</feature>
<feature type="strand" evidence="5">
    <location>
        <begin position="477"/>
        <end position="481"/>
    </location>
</feature>
<feature type="strand" evidence="5">
    <location>
        <begin position="487"/>
        <end position="492"/>
    </location>
</feature>
<feature type="strand" evidence="5">
    <location>
        <begin position="496"/>
        <end position="502"/>
    </location>
</feature>
<feature type="helix" evidence="5">
    <location>
        <begin position="503"/>
        <end position="505"/>
    </location>
</feature>
<feature type="helix" evidence="5">
    <location>
        <begin position="517"/>
        <end position="519"/>
    </location>
</feature>
<feature type="helix" evidence="5">
    <location>
        <begin position="526"/>
        <end position="531"/>
    </location>
</feature>
<feature type="helix" evidence="5">
    <location>
        <begin position="533"/>
        <end position="536"/>
    </location>
</feature>
<reference key="1">
    <citation type="submission" date="2007-04" db="EMBL/GenBank/DDBJ databases">
        <title>Draft genome sequence of Bacteroides ovatus (ATCC 8483).</title>
        <authorList>
            <person name="Sudarsanam P."/>
            <person name="Ley R."/>
            <person name="Guruge J."/>
            <person name="Turnbaugh P.J."/>
            <person name="Mahowald M."/>
            <person name="Liep D."/>
            <person name="Gordon J."/>
        </authorList>
    </citation>
    <scope>NUCLEOTIDE SEQUENCE [LARGE SCALE GENOMIC DNA]</scope>
    <source>
        <strain>ATCC 8483 / DSM 1896 / JCM 5824 / BCRC 10623 / CCUG 4943 / NCTC 11153</strain>
    </source>
</reference>
<reference key="2">
    <citation type="journal article" date="2014" name="Nature">
        <title>A discrete genetic locus confers xyloglucan metabolism in select human gut Bacteroidetes.</title>
        <authorList>
            <person name="Larsbrink J."/>
            <person name="Rogers T.E."/>
            <person name="Hemsworth G.R."/>
            <person name="McKee L.S."/>
            <person name="Tauzin A.S."/>
            <person name="Spadiut O."/>
            <person name="Klinter S."/>
            <person name="Pudlo N.A."/>
            <person name="Urs K."/>
            <person name="Koropatkin N.M."/>
            <person name="Creagh A.L."/>
            <person name="Haynes C.A."/>
            <person name="Kelly A.G."/>
            <person name="Cederholm S.N."/>
            <person name="Davies G.J."/>
            <person name="Martens E.C."/>
            <person name="Brumer H."/>
        </authorList>
    </citation>
    <scope>FUNCTION</scope>
    <scope>PATHWAY</scope>
</reference>
<organism>
    <name type="scientific">Bacteroides ovatus (strain ATCC 8483 / DSM 1896 / JCM 5824 / BCRC 10623 / CCUG 4943 / NCTC 11153)</name>
    <dbReference type="NCBI Taxonomy" id="411476"/>
    <lineage>
        <taxon>Bacteria</taxon>
        <taxon>Pseudomonadati</taxon>
        <taxon>Bacteroidota</taxon>
        <taxon>Bacteroidia</taxon>
        <taxon>Bacteroidales</taxon>
        <taxon>Bacteroidaceae</taxon>
        <taxon>Bacteroides</taxon>
    </lineage>
</organism>